<evidence type="ECO:0000250" key="1"/>
<evidence type="ECO:0000250" key="2">
    <source>
        <dbReference type="UniProtKB" id="Q9ZW27"/>
    </source>
</evidence>
<evidence type="ECO:0000305" key="3"/>
<proteinExistence type="evidence at transcript level"/>
<organism>
    <name type="scientific">Arabidopsis thaliana</name>
    <name type="common">Mouse-ear cress</name>
    <dbReference type="NCBI Taxonomy" id="3702"/>
    <lineage>
        <taxon>Eukaryota</taxon>
        <taxon>Viridiplantae</taxon>
        <taxon>Streptophyta</taxon>
        <taxon>Embryophyta</taxon>
        <taxon>Tracheophyta</taxon>
        <taxon>Spermatophyta</taxon>
        <taxon>Magnoliopsida</taxon>
        <taxon>eudicotyledons</taxon>
        <taxon>Gunneridae</taxon>
        <taxon>Pentapetalae</taxon>
        <taxon>rosids</taxon>
        <taxon>malvids</taxon>
        <taxon>Brassicales</taxon>
        <taxon>Brassicaceae</taxon>
        <taxon>Camelineae</taxon>
        <taxon>Arabidopsis</taxon>
    </lineage>
</organism>
<comment type="function">
    <text evidence="1">May be involved in the conjugation of reduced glutathione to a wide number of exogenous and endogenous hydrophobic electrophiles and have a detoxification role against certain herbicides.</text>
</comment>
<comment type="catalytic activity">
    <reaction>
        <text>RX + glutathione = an S-substituted glutathione + a halide anion + H(+)</text>
        <dbReference type="Rhea" id="RHEA:16437"/>
        <dbReference type="ChEBI" id="CHEBI:15378"/>
        <dbReference type="ChEBI" id="CHEBI:16042"/>
        <dbReference type="ChEBI" id="CHEBI:17792"/>
        <dbReference type="ChEBI" id="CHEBI:57925"/>
        <dbReference type="ChEBI" id="CHEBI:90779"/>
        <dbReference type="EC" id="2.5.1.18"/>
    </reaction>
</comment>
<comment type="subcellular location">
    <subcellularLocation>
        <location evidence="3">Cytoplasm</location>
        <location evidence="3">Cytosol</location>
    </subcellularLocation>
</comment>
<comment type="similarity">
    <text evidence="3">Belongs to the GST superfamily. Tau family.</text>
</comment>
<accession>Q9SR36</accession>
<name>GSTU8_ARATH</name>
<dbReference type="EC" id="2.5.1.18"/>
<dbReference type="EMBL" id="AC011436">
    <property type="protein sequence ID" value="AAF14025.1"/>
    <property type="molecule type" value="Genomic_DNA"/>
</dbReference>
<dbReference type="EMBL" id="CP002686">
    <property type="protein sequence ID" value="AEE74745.1"/>
    <property type="molecule type" value="Genomic_DNA"/>
</dbReference>
<dbReference type="EMBL" id="BT024844">
    <property type="protein sequence ID" value="ABD60727.1"/>
    <property type="molecule type" value="mRNA"/>
</dbReference>
<dbReference type="EMBL" id="AY086116">
    <property type="protein sequence ID" value="AAM63323.1"/>
    <property type="molecule type" value="mRNA"/>
</dbReference>
<dbReference type="RefSeq" id="NP_187538.1">
    <property type="nucleotide sequence ID" value="NM_111761.3"/>
</dbReference>
<dbReference type="SMR" id="Q9SR36"/>
<dbReference type="FunCoup" id="Q9SR36">
    <property type="interactions" value="227"/>
</dbReference>
<dbReference type="STRING" id="3702.Q9SR36"/>
<dbReference type="PaxDb" id="3702-AT3G09270.1"/>
<dbReference type="ProteomicsDB" id="230165"/>
<dbReference type="EnsemblPlants" id="AT3G09270.1">
    <property type="protein sequence ID" value="AT3G09270.1"/>
    <property type="gene ID" value="AT3G09270"/>
</dbReference>
<dbReference type="GeneID" id="820083"/>
<dbReference type="Gramene" id="AT3G09270.1">
    <property type="protein sequence ID" value="AT3G09270.1"/>
    <property type="gene ID" value="AT3G09270"/>
</dbReference>
<dbReference type="KEGG" id="ath:AT3G09270"/>
<dbReference type="Araport" id="AT3G09270"/>
<dbReference type="TAIR" id="AT3G09270">
    <property type="gene designation" value="GSTU8"/>
</dbReference>
<dbReference type="eggNOG" id="KOG0406">
    <property type="taxonomic scope" value="Eukaryota"/>
</dbReference>
<dbReference type="HOGENOM" id="CLU_011226_18_1_1"/>
<dbReference type="InParanoid" id="Q9SR36"/>
<dbReference type="OMA" id="ACWGPES"/>
<dbReference type="OrthoDB" id="4951845at2759"/>
<dbReference type="PhylomeDB" id="Q9SR36"/>
<dbReference type="BioCyc" id="ARA:AT3G09270-MONOMER"/>
<dbReference type="PRO" id="PR:Q9SR36"/>
<dbReference type="Proteomes" id="UP000006548">
    <property type="component" value="Chromosome 3"/>
</dbReference>
<dbReference type="ExpressionAtlas" id="Q9SR36">
    <property type="expression patterns" value="baseline and differential"/>
</dbReference>
<dbReference type="GO" id="GO:0005737">
    <property type="term" value="C:cytoplasm"/>
    <property type="evidence" value="ECO:0000303"/>
    <property type="project" value="TAIR"/>
</dbReference>
<dbReference type="GO" id="GO:0005829">
    <property type="term" value="C:cytosol"/>
    <property type="evidence" value="ECO:0007669"/>
    <property type="project" value="UniProtKB-SubCell"/>
</dbReference>
<dbReference type="GO" id="GO:0004364">
    <property type="term" value="F:glutathione transferase activity"/>
    <property type="evidence" value="ECO:0007669"/>
    <property type="project" value="UniProtKB-EC"/>
</dbReference>
<dbReference type="GO" id="GO:0006749">
    <property type="term" value="P:glutathione metabolic process"/>
    <property type="evidence" value="ECO:0007669"/>
    <property type="project" value="InterPro"/>
</dbReference>
<dbReference type="GO" id="GO:0009407">
    <property type="term" value="P:toxin catabolic process"/>
    <property type="evidence" value="ECO:0000304"/>
    <property type="project" value="TAIR"/>
</dbReference>
<dbReference type="CDD" id="cd03185">
    <property type="entry name" value="GST_C_Tau"/>
    <property type="match status" value="1"/>
</dbReference>
<dbReference type="CDD" id="cd03058">
    <property type="entry name" value="GST_N_Tau"/>
    <property type="match status" value="1"/>
</dbReference>
<dbReference type="FunFam" id="1.20.1050.10:FF:000012">
    <property type="entry name" value="Tau class glutathione S-transferase"/>
    <property type="match status" value="1"/>
</dbReference>
<dbReference type="FunFam" id="3.40.30.10:FF:000014">
    <property type="entry name" value="Tau class glutathione S-transferase"/>
    <property type="match status" value="1"/>
</dbReference>
<dbReference type="Gene3D" id="1.20.1050.10">
    <property type="match status" value="1"/>
</dbReference>
<dbReference type="Gene3D" id="3.40.30.10">
    <property type="entry name" value="Glutaredoxin"/>
    <property type="match status" value="1"/>
</dbReference>
<dbReference type="InterPro" id="IPR010987">
    <property type="entry name" value="Glutathione-S-Trfase_C-like"/>
</dbReference>
<dbReference type="InterPro" id="IPR036282">
    <property type="entry name" value="Glutathione-S-Trfase_C_sf"/>
</dbReference>
<dbReference type="InterPro" id="IPR004045">
    <property type="entry name" value="Glutathione_S-Trfase_N"/>
</dbReference>
<dbReference type="InterPro" id="IPR004046">
    <property type="entry name" value="GST_C"/>
</dbReference>
<dbReference type="InterPro" id="IPR045074">
    <property type="entry name" value="GST_C_Tau"/>
</dbReference>
<dbReference type="InterPro" id="IPR045073">
    <property type="entry name" value="Omega/Tau-like"/>
</dbReference>
<dbReference type="InterPro" id="IPR036249">
    <property type="entry name" value="Thioredoxin-like_sf"/>
</dbReference>
<dbReference type="PANTHER" id="PTHR11260:SF676">
    <property type="entry name" value="GLUTATHIONE S-TRANSFERASE U8"/>
    <property type="match status" value="1"/>
</dbReference>
<dbReference type="PANTHER" id="PTHR11260">
    <property type="entry name" value="GLUTATHIONE S-TRANSFERASE, GST, SUPERFAMILY, GST DOMAIN CONTAINING"/>
    <property type="match status" value="1"/>
</dbReference>
<dbReference type="Pfam" id="PF00043">
    <property type="entry name" value="GST_C"/>
    <property type="match status" value="1"/>
</dbReference>
<dbReference type="Pfam" id="PF02798">
    <property type="entry name" value="GST_N"/>
    <property type="match status" value="1"/>
</dbReference>
<dbReference type="SFLD" id="SFLDG01152">
    <property type="entry name" value="Main.3:_Omega-_and_Tau-like"/>
    <property type="match status" value="1"/>
</dbReference>
<dbReference type="SFLD" id="SFLDG00358">
    <property type="entry name" value="Main_(cytGST)"/>
    <property type="match status" value="1"/>
</dbReference>
<dbReference type="SUPFAM" id="SSF47616">
    <property type="entry name" value="GST C-terminal domain-like"/>
    <property type="match status" value="1"/>
</dbReference>
<dbReference type="SUPFAM" id="SSF52833">
    <property type="entry name" value="Thioredoxin-like"/>
    <property type="match status" value="1"/>
</dbReference>
<dbReference type="PROSITE" id="PS50405">
    <property type="entry name" value="GST_CTER"/>
    <property type="match status" value="1"/>
</dbReference>
<dbReference type="PROSITE" id="PS50404">
    <property type="entry name" value="GST_NTER"/>
    <property type="match status" value="1"/>
</dbReference>
<keyword id="KW-0963">Cytoplasm</keyword>
<keyword id="KW-0216">Detoxification</keyword>
<keyword id="KW-0597">Phosphoprotein</keyword>
<keyword id="KW-1185">Reference proteome</keyword>
<keyword id="KW-0808">Transferase</keyword>
<reference key="1">
    <citation type="journal article" date="2000" name="Nature">
        <title>Sequence and analysis of chromosome 3 of the plant Arabidopsis thaliana.</title>
        <authorList>
            <person name="Salanoubat M."/>
            <person name="Lemcke K."/>
            <person name="Rieger M."/>
            <person name="Ansorge W."/>
            <person name="Unseld M."/>
            <person name="Fartmann B."/>
            <person name="Valle G."/>
            <person name="Bloecker H."/>
            <person name="Perez-Alonso M."/>
            <person name="Obermaier B."/>
            <person name="Delseny M."/>
            <person name="Boutry M."/>
            <person name="Grivell L.A."/>
            <person name="Mache R."/>
            <person name="Puigdomenech P."/>
            <person name="De Simone V."/>
            <person name="Choisne N."/>
            <person name="Artiguenave F."/>
            <person name="Robert C."/>
            <person name="Brottier P."/>
            <person name="Wincker P."/>
            <person name="Cattolico L."/>
            <person name="Weissenbach J."/>
            <person name="Saurin W."/>
            <person name="Quetier F."/>
            <person name="Schaefer M."/>
            <person name="Mueller-Auer S."/>
            <person name="Gabel C."/>
            <person name="Fuchs M."/>
            <person name="Benes V."/>
            <person name="Wurmbach E."/>
            <person name="Drzonek H."/>
            <person name="Erfle H."/>
            <person name="Jordan N."/>
            <person name="Bangert S."/>
            <person name="Wiedelmann R."/>
            <person name="Kranz H."/>
            <person name="Voss H."/>
            <person name="Holland R."/>
            <person name="Brandt P."/>
            <person name="Nyakatura G."/>
            <person name="Vezzi A."/>
            <person name="D'Angelo M."/>
            <person name="Pallavicini A."/>
            <person name="Toppo S."/>
            <person name="Simionati B."/>
            <person name="Conrad A."/>
            <person name="Hornischer K."/>
            <person name="Kauer G."/>
            <person name="Loehnert T.-H."/>
            <person name="Nordsiek G."/>
            <person name="Reichelt J."/>
            <person name="Scharfe M."/>
            <person name="Schoen O."/>
            <person name="Bargues M."/>
            <person name="Terol J."/>
            <person name="Climent J."/>
            <person name="Navarro P."/>
            <person name="Collado C."/>
            <person name="Perez-Perez A."/>
            <person name="Ottenwaelder B."/>
            <person name="Duchemin D."/>
            <person name="Cooke R."/>
            <person name="Laudie M."/>
            <person name="Berger-Llauro C."/>
            <person name="Purnelle B."/>
            <person name="Masuy D."/>
            <person name="de Haan M."/>
            <person name="Maarse A.C."/>
            <person name="Alcaraz J.-P."/>
            <person name="Cottet A."/>
            <person name="Casacuberta E."/>
            <person name="Monfort A."/>
            <person name="Argiriou A."/>
            <person name="Flores M."/>
            <person name="Liguori R."/>
            <person name="Vitale D."/>
            <person name="Mannhaupt G."/>
            <person name="Haase D."/>
            <person name="Schoof H."/>
            <person name="Rudd S."/>
            <person name="Zaccaria P."/>
            <person name="Mewes H.-W."/>
            <person name="Mayer K.F.X."/>
            <person name="Kaul S."/>
            <person name="Town C.D."/>
            <person name="Koo H.L."/>
            <person name="Tallon L.J."/>
            <person name="Jenkins J."/>
            <person name="Rooney T."/>
            <person name="Rizzo M."/>
            <person name="Walts A."/>
            <person name="Utterback T."/>
            <person name="Fujii C.Y."/>
            <person name="Shea T.P."/>
            <person name="Creasy T.H."/>
            <person name="Haas B."/>
            <person name="Maiti R."/>
            <person name="Wu D."/>
            <person name="Peterson J."/>
            <person name="Van Aken S."/>
            <person name="Pai G."/>
            <person name="Militscher J."/>
            <person name="Sellers P."/>
            <person name="Gill J.E."/>
            <person name="Feldblyum T.V."/>
            <person name="Preuss D."/>
            <person name="Lin X."/>
            <person name="Nierman W.C."/>
            <person name="Salzberg S.L."/>
            <person name="White O."/>
            <person name="Venter J.C."/>
            <person name="Fraser C.M."/>
            <person name="Kaneko T."/>
            <person name="Nakamura Y."/>
            <person name="Sato S."/>
            <person name="Kato T."/>
            <person name="Asamizu E."/>
            <person name="Sasamoto S."/>
            <person name="Kimura T."/>
            <person name="Idesawa K."/>
            <person name="Kawashima K."/>
            <person name="Kishida Y."/>
            <person name="Kiyokawa C."/>
            <person name="Kohara M."/>
            <person name="Matsumoto M."/>
            <person name="Matsuno A."/>
            <person name="Muraki A."/>
            <person name="Nakayama S."/>
            <person name="Nakazaki N."/>
            <person name="Shinpo S."/>
            <person name="Takeuchi C."/>
            <person name="Wada T."/>
            <person name="Watanabe A."/>
            <person name="Yamada M."/>
            <person name="Yasuda M."/>
            <person name="Tabata S."/>
        </authorList>
    </citation>
    <scope>NUCLEOTIDE SEQUENCE [LARGE SCALE GENOMIC DNA]</scope>
    <source>
        <strain>cv. Columbia</strain>
    </source>
</reference>
<reference key="2">
    <citation type="journal article" date="2017" name="Plant J.">
        <title>Araport11: a complete reannotation of the Arabidopsis thaliana reference genome.</title>
        <authorList>
            <person name="Cheng C.Y."/>
            <person name="Krishnakumar V."/>
            <person name="Chan A.P."/>
            <person name="Thibaud-Nissen F."/>
            <person name="Schobel S."/>
            <person name="Town C.D."/>
        </authorList>
    </citation>
    <scope>GENOME REANNOTATION</scope>
    <source>
        <strain>cv. Columbia</strain>
    </source>
</reference>
<reference key="3">
    <citation type="submission" date="2006-03" db="EMBL/GenBank/DDBJ databases">
        <title>Arabidopsis ORF clones.</title>
        <authorList>
            <person name="Kim C.J."/>
            <person name="Chen H."/>
            <person name="Shinn P."/>
            <person name="Ecker J.R."/>
        </authorList>
    </citation>
    <scope>NUCLEOTIDE SEQUENCE [LARGE SCALE MRNA]</scope>
    <source>
        <strain>cv. Columbia</strain>
    </source>
</reference>
<reference key="4">
    <citation type="submission" date="2002-03" db="EMBL/GenBank/DDBJ databases">
        <title>Full-length cDNA from Arabidopsis thaliana.</title>
        <authorList>
            <person name="Brover V.V."/>
            <person name="Troukhan M.E."/>
            <person name="Alexandrov N.A."/>
            <person name="Lu Y.-P."/>
            <person name="Flavell R.B."/>
            <person name="Feldmann K.A."/>
        </authorList>
    </citation>
    <scope>NUCLEOTIDE SEQUENCE [LARGE SCALE MRNA]</scope>
</reference>
<reference key="5">
    <citation type="journal article" date="2002" name="Plant Mol. Biol.">
        <title>Probing the diversity of the Arabidopsis glutathione S-transferase gene family.</title>
        <authorList>
            <person name="Wagner U."/>
            <person name="Edwards R."/>
            <person name="Dixon D.P."/>
            <person name="Mauch F."/>
        </authorList>
    </citation>
    <scope>GENE FAMILY</scope>
    <scope>NOMENCLATURE</scope>
</reference>
<sequence length="224" mass="25714">MNQEEHVKLLGLWGSPFSKRVEMVLKLKGIPYEYIEEDVYGNRSPMLLKYNPIHKKVPVLIHNGRSIAESLVIVEYIEDTWKTTHTILPQDPYERAMARFWAKYVDEKVMLAVKKACWGPESEREKEVKEAYEGLKCLEKELGDKLFFGGETIGFVDIAADFIGYWLGIFQEASGVTIMTAEEFPKLQRWSEDFVGNNFIKEVLPPKEKLVAVLKAMFGSVTSN</sequence>
<feature type="chain" id="PRO_0000413554" description="Glutathione S-transferase U8">
    <location>
        <begin position="1"/>
        <end position="224"/>
    </location>
</feature>
<feature type="domain" description="GST N-terminal">
    <location>
        <begin position="5"/>
        <end position="85"/>
    </location>
</feature>
<feature type="domain" description="GST C-terminal">
    <location>
        <begin position="91"/>
        <end position="213"/>
    </location>
</feature>
<feature type="binding site" evidence="1">
    <location>
        <begin position="15"/>
        <end position="16"/>
    </location>
    <ligand>
        <name>glutathione</name>
        <dbReference type="ChEBI" id="CHEBI:57925"/>
    </ligand>
</feature>
<feature type="binding site" evidence="1">
    <location>
        <begin position="42"/>
        <end position="43"/>
    </location>
    <ligand>
        <name>glutathione</name>
        <dbReference type="ChEBI" id="CHEBI:57925"/>
    </ligand>
</feature>
<feature type="binding site" evidence="1">
    <location>
        <begin position="56"/>
        <end position="57"/>
    </location>
    <ligand>
        <name>glutathione</name>
        <dbReference type="ChEBI" id="CHEBI:57925"/>
    </ligand>
</feature>
<feature type="binding site" evidence="1">
    <location>
        <begin position="69"/>
        <end position="70"/>
    </location>
    <ligand>
        <name>glutathione</name>
        <dbReference type="ChEBI" id="CHEBI:57925"/>
    </ligand>
</feature>
<feature type="modified residue" description="Phosphothreonine" evidence="2">
    <location>
        <position position="152"/>
    </location>
</feature>
<protein>
    <recommendedName>
        <fullName>Glutathione S-transferase U8</fullName>
        <shortName>AtGSTU8</shortName>
        <ecNumber>2.5.1.18</ecNumber>
    </recommendedName>
    <alternativeName>
        <fullName>GST class-tau member 8</fullName>
    </alternativeName>
</protein>
<gene>
    <name type="primary">GSTU8</name>
    <name type="ordered locus">At3g09270</name>
    <name type="ORF">F3L24.14</name>
</gene>